<name>GPDA_WOLPM</name>
<keyword id="KW-0963">Cytoplasm</keyword>
<keyword id="KW-0444">Lipid biosynthesis</keyword>
<keyword id="KW-0443">Lipid metabolism</keyword>
<keyword id="KW-0520">NAD</keyword>
<keyword id="KW-0521">NADP</keyword>
<keyword id="KW-0547">Nucleotide-binding</keyword>
<keyword id="KW-0560">Oxidoreductase</keyword>
<keyword id="KW-0594">Phospholipid biosynthesis</keyword>
<keyword id="KW-1208">Phospholipid metabolism</keyword>
<protein>
    <recommendedName>
        <fullName evidence="1">Glycerol-3-phosphate dehydrogenase [NAD(P)+]</fullName>
        <ecNumber evidence="1">1.1.1.94</ecNumber>
    </recommendedName>
    <alternativeName>
        <fullName evidence="1">NAD(P)(+)-dependent glycerol-3-phosphate dehydrogenase</fullName>
    </alternativeName>
    <alternativeName>
        <fullName evidence="1">NAD(P)H-dependent dihydroxyacetone-phosphate reductase</fullName>
    </alternativeName>
</protein>
<comment type="function">
    <text evidence="1">Catalyzes the reduction of the glycolytic intermediate dihydroxyacetone phosphate (DHAP) to sn-glycerol 3-phosphate (G3P), the key precursor for phospholipid synthesis.</text>
</comment>
<comment type="catalytic activity">
    <reaction evidence="1">
        <text>sn-glycerol 3-phosphate + NAD(+) = dihydroxyacetone phosphate + NADH + H(+)</text>
        <dbReference type="Rhea" id="RHEA:11092"/>
        <dbReference type="ChEBI" id="CHEBI:15378"/>
        <dbReference type="ChEBI" id="CHEBI:57540"/>
        <dbReference type="ChEBI" id="CHEBI:57597"/>
        <dbReference type="ChEBI" id="CHEBI:57642"/>
        <dbReference type="ChEBI" id="CHEBI:57945"/>
        <dbReference type="EC" id="1.1.1.94"/>
    </reaction>
    <physiologicalReaction direction="right-to-left" evidence="1">
        <dbReference type="Rhea" id="RHEA:11094"/>
    </physiologicalReaction>
</comment>
<comment type="catalytic activity">
    <reaction evidence="1">
        <text>sn-glycerol 3-phosphate + NADP(+) = dihydroxyacetone phosphate + NADPH + H(+)</text>
        <dbReference type="Rhea" id="RHEA:11096"/>
        <dbReference type="ChEBI" id="CHEBI:15378"/>
        <dbReference type="ChEBI" id="CHEBI:57597"/>
        <dbReference type="ChEBI" id="CHEBI:57642"/>
        <dbReference type="ChEBI" id="CHEBI:57783"/>
        <dbReference type="ChEBI" id="CHEBI:58349"/>
        <dbReference type="EC" id="1.1.1.94"/>
    </reaction>
    <physiologicalReaction direction="right-to-left" evidence="1">
        <dbReference type="Rhea" id="RHEA:11098"/>
    </physiologicalReaction>
</comment>
<comment type="pathway">
    <text evidence="1">Membrane lipid metabolism; glycerophospholipid metabolism.</text>
</comment>
<comment type="subcellular location">
    <subcellularLocation>
        <location evidence="1">Cytoplasm</location>
    </subcellularLocation>
</comment>
<comment type="similarity">
    <text evidence="1">Belongs to the NAD-dependent glycerol-3-phosphate dehydrogenase family.</text>
</comment>
<accession>P61749</accession>
<organism>
    <name type="scientific">Wolbachia pipientis wMel</name>
    <dbReference type="NCBI Taxonomy" id="163164"/>
    <lineage>
        <taxon>Bacteria</taxon>
        <taxon>Pseudomonadati</taxon>
        <taxon>Pseudomonadota</taxon>
        <taxon>Alphaproteobacteria</taxon>
        <taxon>Rickettsiales</taxon>
        <taxon>Anaplasmataceae</taxon>
        <taxon>Wolbachieae</taxon>
        <taxon>Wolbachia</taxon>
    </lineage>
</organism>
<proteinExistence type="inferred from homology"/>
<feature type="chain" id="PRO_0000138059" description="Glycerol-3-phosphate dehydrogenase [NAD(P)+]">
    <location>
        <begin position="1"/>
        <end position="327"/>
    </location>
</feature>
<feature type="active site" description="Proton acceptor" evidence="1">
    <location>
        <position position="186"/>
    </location>
</feature>
<feature type="binding site" evidence="1">
    <location>
        <position position="11"/>
    </location>
    <ligand>
        <name>NADPH</name>
        <dbReference type="ChEBI" id="CHEBI:57783"/>
    </ligand>
</feature>
<feature type="binding site" evidence="1">
    <location>
        <position position="30"/>
    </location>
    <ligand>
        <name>NADPH</name>
        <dbReference type="ChEBI" id="CHEBI:57783"/>
    </ligand>
</feature>
<feature type="binding site" evidence="1">
    <location>
        <position position="103"/>
    </location>
    <ligand>
        <name>NADPH</name>
        <dbReference type="ChEBI" id="CHEBI:57783"/>
    </ligand>
</feature>
<feature type="binding site" evidence="1">
    <location>
        <position position="103"/>
    </location>
    <ligand>
        <name>sn-glycerol 3-phosphate</name>
        <dbReference type="ChEBI" id="CHEBI:57597"/>
    </ligand>
</feature>
<feature type="binding site" evidence="1">
    <location>
        <position position="131"/>
    </location>
    <ligand>
        <name>sn-glycerol 3-phosphate</name>
        <dbReference type="ChEBI" id="CHEBI:57597"/>
    </ligand>
</feature>
<feature type="binding site" evidence="1">
    <location>
        <position position="133"/>
    </location>
    <ligand>
        <name>sn-glycerol 3-phosphate</name>
        <dbReference type="ChEBI" id="CHEBI:57597"/>
    </ligand>
</feature>
<feature type="binding site" evidence="1">
    <location>
        <position position="135"/>
    </location>
    <ligand>
        <name>NADPH</name>
        <dbReference type="ChEBI" id="CHEBI:57783"/>
    </ligand>
</feature>
<feature type="binding site" evidence="1">
    <location>
        <position position="186"/>
    </location>
    <ligand>
        <name>sn-glycerol 3-phosphate</name>
        <dbReference type="ChEBI" id="CHEBI:57597"/>
    </ligand>
</feature>
<feature type="binding site" evidence="1">
    <location>
        <position position="243"/>
    </location>
    <ligand>
        <name>sn-glycerol 3-phosphate</name>
        <dbReference type="ChEBI" id="CHEBI:57597"/>
    </ligand>
</feature>
<feature type="binding site" evidence="1">
    <location>
        <position position="253"/>
    </location>
    <ligand>
        <name>sn-glycerol 3-phosphate</name>
        <dbReference type="ChEBI" id="CHEBI:57597"/>
    </ligand>
</feature>
<feature type="binding site" evidence="1">
    <location>
        <position position="254"/>
    </location>
    <ligand>
        <name>NADPH</name>
        <dbReference type="ChEBI" id="CHEBI:57783"/>
    </ligand>
</feature>
<feature type="binding site" evidence="1">
    <location>
        <position position="254"/>
    </location>
    <ligand>
        <name>sn-glycerol 3-phosphate</name>
        <dbReference type="ChEBI" id="CHEBI:57597"/>
    </ligand>
</feature>
<feature type="binding site" evidence="1">
    <location>
        <position position="255"/>
    </location>
    <ligand>
        <name>sn-glycerol 3-phosphate</name>
        <dbReference type="ChEBI" id="CHEBI:57597"/>
    </ligand>
</feature>
<feature type="binding site" evidence="1">
    <location>
        <position position="281"/>
    </location>
    <ligand>
        <name>NADPH</name>
        <dbReference type="ChEBI" id="CHEBI:57783"/>
    </ligand>
</feature>
<feature type="binding site" evidence="1">
    <location>
        <position position="283"/>
    </location>
    <ligand>
        <name>NADPH</name>
        <dbReference type="ChEBI" id="CHEBI:57783"/>
    </ligand>
</feature>
<sequence length="327" mass="34923">MAISILGAGAWGTAIAISLGSKKDVILWTHNETTFESINGKRESDKLPGCRISDNVSVKLAIEDIINASVTILAVPTQSLRKVCQQLHNCNLKKDVAIILACKGIEKSTLKLPSEIVNEILPNNPIAIFSGPSFAVEVARKLPYSMVLACQNNTLGSKLVSELQQENVKLEFSNDIIGVQICAALKNVFAIACGIVLGSKLGFNAHAALITKSMSEIKALYSAKIGDGSVDINTLLGPACLGDLIMTCTSLNSRNLSFGFKIGNSDNGFNVQQILSEGKSVIEGFSTAESIFNLAGKLKIKMPICEAVYRLLYESASIEDTLSVLIS</sequence>
<gene>
    <name evidence="1" type="primary">gpsA</name>
    <name type="ordered locus">WD_0731</name>
</gene>
<reference key="1">
    <citation type="journal article" date="2004" name="PLoS Biol.">
        <title>Phylogenomics of the reproductive parasite Wolbachia pipientis wMel: a streamlined genome overrun by mobile genetic elements.</title>
        <authorList>
            <person name="Wu M."/>
            <person name="Sun L.V."/>
            <person name="Vamathevan J.J."/>
            <person name="Riegler M."/>
            <person name="DeBoy R.T."/>
            <person name="Brownlie J.C."/>
            <person name="McGraw E.A."/>
            <person name="Martin W."/>
            <person name="Esser C."/>
            <person name="Ahmadinejad N."/>
            <person name="Wiegand C."/>
            <person name="Madupu R."/>
            <person name="Beanan M.J."/>
            <person name="Brinkac L.M."/>
            <person name="Daugherty S.C."/>
            <person name="Durkin A.S."/>
            <person name="Kolonay J.F."/>
            <person name="Nelson W.C."/>
            <person name="Mohamoud Y."/>
            <person name="Lee P."/>
            <person name="Berry K.J."/>
            <person name="Young M.B."/>
            <person name="Utterback T.R."/>
            <person name="Weidman J.F."/>
            <person name="Nierman W.C."/>
            <person name="Paulsen I.T."/>
            <person name="Nelson K.E."/>
            <person name="Tettelin H."/>
            <person name="O'Neill S.L."/>
            <person name="Eisen J.A."/>
        </authorList>
    </citation>
    <scope>NUCLEOTIDE SEQUENCE [LARGE SCALE GENOMIC DNA]</scope>
</reference>
<dbReference type="EC" id="1.1.1.94" evidence="1"/>
<dbReference type="EMBL" id="AE017196">
    <property type="protein sequence ID" value="AAS14423.1"/>
    <property type="molecule type" value="Genomic_DNA"/>
</dbReference>
<dbReference type="RefSeq" id="WP_010962796.1">
    <property type="nucleotide sequence ID" value="NZ_OX384529.1"/>
</dbReference>
<dbReference type="SMR" id="P61749"/>
<dbReference type="EnsemblBacteria" id="AAS14423">
    <property type="protein sequence ID" value="AAS14423"/>
    <property type="gene ID" value="WD_0731"/>
</dbReference>
<dbReference type="KEGG" id="wol:WD_0731"/>
<dbReference type="eggNOG" id="COG0240">
    <property type="taxonomic scope" value="Bacteria"/>
</dbReference>
<dbReference type="UniPathway" id="UPA00940"/>
<dbReference type="Proteomes" id="UP000008215">
    <property type="component" value="Chromosome"/>
</dbReference>
<dbReference type="GO" id="GO:0005829">
    <property type="term" value="C:cytosol"/>
    <property type="evidence" value="ECO:0007669"/>
    <property type="project" value="TreeGrafter"/>
</dbReference>
<dbReference type="GO" id="GO:0047952">
    <property type="term" value="F:glycerol-3-phosphate dehydrogenase [NAD(P)+] activity"/>
    <property type="evidence" value="ECO:0007669"/>
    <property type="project" value="UniProtKB-UniRule"/>
</dbReference>
<dbReference type="GO" id="GO:0051287">
    <property type="term" value="F:NAD binding"/>
    <property type="evidence" value="ECO:0007669"/>
    <property type="project" value="InterPro"/>
</dbReference>
<dbReference type="GO" id="GO:0005975">
    <property type="term" value="P:carbohydrate metabolic process"/>
    <property type="evidence" value="ECO:0007669"/>
    <property type="project" value="InterPro"/>
</dbReference>
<dbReference type="GO" id="GO:0046167">
    <property type="term" value="P:glycerol-3-phosphate biosynthetic process"/>
    <property type="evidence" value="ECO:0007669"/>
    <property type="project" value="UniProtKB-UniRule"/>
</dbReference>
<dbReference type="GO" id="GO:0046168">
    <property type="term" value="P:glycerol-3-phosphate catabolic process"/>
    <property type="evidence" value="ECO:0007669"/>
    <property type="project" value="InterPro"/>
</dbReference>
<dbReference type="GO" id="GO:0006650">
    <property type="term" value="P:glycerophospholipid metabolic process"/>
    <property type="evidence" value="ECO:0007669"/>
    <property type="project" value="UniProtKB-UniRule"/>
</dbReference>
<dbReference type="GO" id="GO:0008654">
    <property type="term" value="P:phospholipid biosynthetic process"/>
    <property type="evidence" value="ECO:0007669"/>
    <property type="project" value="UniProtKB-KW"/>
</dbReference>
<dbReference type="Gene3D" id="1.10.1040.10">
    <property type="entry name" value="N-(1-d-carboxylethyl)-l-norvaline Dehydrogenase, domain 2"/>
    <property type="match status" value="1"/>
</dbReference>
<dbReference type="Gene3D" id="3.40.50.720">
    <property type="entry name" value="NAD(P)-binding Rossmann-like Domain"/>
    <property type="match status" value="1"/>
</dbReference>
<dbReference type="HAMAP" id="MF_00394">
    <property type="entry name" value="NAD_Glyc3P_dehydrog"/>
    <property type="match status" value="1"/>
</dbReference>
<dbReference type="InterPro" id="IPR008927">
    <property type="entry name" value="6-PGluconate_DH-like_C_sf"/>
</dbReference>
<dbReference type="InterPro" id="IPR013328">
    <property type="entry name" value="6PGD_dom2"/>
</dbReference>
<dbReference type="InterPro" id="IPR006168">
    <property type="entry name" value="G3P_DH_NAD-dep"/>
</dbReference>
<dbReference type="InterPro" id="IPR006109">
    <property type="entry name" value="G3P_DH_NAD-dep_C"/>
</dbReference>
<dbReference type="InterPro" id="IPR011128">
    <property type="entry name" value="G3P_DH_NAD-dep_N"/>
</dbReference>
<dbReference type="InterPro" id="IPR036291">
    <property type="entry name" value="NAD(P)-bd_dom_sf"/>
</dbReference>
<dbReference type="NCBIfam" id="NF000940">
    <property type="entry name" value="PRK00094.1-2"/>
    <property type="match status" value="1"/>
</dbReference>
<dbReference type="NCBIfam" id="NF000942">
    <property type="entry name" value="PRK00094.1-4"/>
    <property type="match status" value="1"/>
</dbReference>
<dbReference type="NCBIfam" id="NF011213">
    <property type="entry name" value="PRK14620.1"/>
    <property type="match status" value="1"/>
</dbReference>
<dbReference type="PANTHER" id="PTHR11728">
    <property type="entry name" value="GLYCEROL-3-PHOSPHATE DEHYDROGENASE"/>
    <property type="match status" value="1"/>
</dbReference>
<dbReference type="PANTHER" id="PTHR11728:SF1">
    <property type="entry name" value="GLYCEROL-3-PHOSPHATE DEHYDROGENASE [NAD(+)] 2, CHLOROPLASTIC"/>
    <property type="match status" value="1"/>
</dbReference>
<dbReference type="Pfam" id="PF07479">
    <property type="entry name" value="NAD_Gly3P_dh_C"/>
    <property type="match status" value="1"/>
</dbReference>
<dbReference type="Pfam" id="PF01210">
    <property type="entry name" value="NAD_Gly3P_dh_N"/>
    <property type="match status" value="1"/>
</dbReference>
<dbReference type="PIRSF" id="PIRSF000114">
    <property type="entry name" value="Glycerol-3-P_dh"/>
    <property type="match status" value="1"/>
</dbReference>
<dbReference type="PRINTS" id="PR00077">
    <property type="entry name" value="GPDHDRGNASE"/>
</dbReference>
<dbReference type="SUPFAM" id="SSF48179">
    <property type="entry name" value="6-phosphogluconate dehydrogenase C-terminal domain-like"/>
    <property type="match status" value="1"/>
</dbReference>
<dbReference type="SUPFAM" id="SSF51735">
    <property type="entry name" value="NAD(P)-binding Rossmann-fold domains"/>
    <property type="match status" value="1"/>
</dbReference>
<dbReference type="PROSITE" id="PS00957">
    <property type="entry name" value="NAD_G3PDH"/>
    <property type="match status" value="1"/>
</dbReference>
<evidence type="ECO:0000255" key="1">
    <source>
        <dbReference type="HAMAP-Rule" id="MF_00394"/>
    </source>
</evidence>